<name>ERS1_SCHPO</name>
<reference key="1">
    <citation type="journal article" date="2002" name="Nature">
        <title>The genome sequence of Schizosaccharomyces pombe.</title>
        <authorList>
            <person name="Wood V."/>
            <person name="Gwilliam R."/>
            <person name="Rajandream M.A."/>
            <person name="Lyne M.H."/>
            <person name="Lyne R."/>
            <person name="Stewart A."/>
            <person name="Sgouros J.G."/>
            <person name="Peat N."/>
            <person name="Hayles J."/>
            <person name="Baker S.G."/>
            <person name="Basham D."/>
            <person name="Bowman S."/>
            <person name="Brooks K."/>
            <person name="Brown D."/>
            <person name="Brown S."/>
            <person name="Chillingworth T."/>
            <person name="Churcher C.M."/>
            <person name="Collins M."/>
            <person name="Connor R."/>
            <person name="Cronin A."/>
            <person name="Davis P."/>
            <person name="Feltwell T."/>
            <person name="Fraser A."/>
            <person name="Gentles S."/>
            <person name="Goble A."/>
            <person name="Hamlin N."/>
            <person name="Harris D.E."/>
            <person name="Hidalgo J."/>
            <person name="Hodgson G."/>
            <person name="Holroyd S."/>
            <person name="Hornsby T."/>
            <person name="Howarth S."/>
            <person name="Huckle E.J."/>
            <person name="Hunt S."/>
            <person name="Jagels K."/>
            <person name="James K.D."/>
            <person name="Jones L."/>
            <person name="Jones M."/>
            <person name="Leather S."/>
            <person name="McDonald S."/>
            <person name="McLean J."/>
            <person name="Mooney P."/>
            <person name="Moule S."/>
            <person name="Mungall K.L."/>
            <person name="Murphy L.D."/>
            <person name="Niblett D."/>
            <person name="Odell C."/>
            <person name="Oliver K."/>
            <person name="O'Neil S."/>
            <person name="Pearson D."/>
            <person name="Quail M.A."/>
            <person name="Rabbinowitsch E."/>
            <person name="Rutherford K.M."/>
            <person name="Rutter S."/>
            <person name="Saunders D."/>
            <person name="Seeger K."/>
            <person name="Sharp S."/>
            <person name="Skelton J."/>
            <person name="Simmonds M.N."/>
            <person name="Squares R."/>
            <person name="Squares S."/>
            <person name="Stevens K."/>
            <person name="Taylor K."/>
            <person name="Taylor R.G."/>
            <person name="Tivey A."/>
            <person name="Walsh S.V."/>
            <person name="Warren T."/>
            <person name="Whitehead S."/>
            <person name="Woodward J.R."/>
            <person name="Volckaert G."/>
            <person name="Aert R."/>
            <person name="Robben J."/>
            <person name="Grymonprez B."/>
            <person name="Weltjens I."/>
            <person name="Vanstreels E."/>
            <person name="Rieger M."/>
            <person name="Schaefer M."/>
            <person name="Mueller-Auer S."/>
            <person name="Gabel C."/>
            <person name="Fuchs M."/>
            <person name="Duesterhoeft A."/>
            <person name="Fritzc C."/>
            <person name="Holzer E."/>
            <person name="Moestl D."/>
            <person name="Hilbert H."/>
            <person name="Borzym K."/>
            <person name="Langer I."/>
            <person name="Beck A."/>
            <person name="Lehrach H."/>
            <person name="Reinhardt R."/>
            <person name="Pohl T.M."/>
            <person name="Eger P."/>
            <person name="Zimmermann W."/>
            <person name="Wedler H."/>
            <person name="Wambutt R."/>
            <person name="Purnelle B."/>
            <person name="Goffeau A."/>
            <person name="Cadieu E."/>
            <person name="Dreano S."/>
            <person name="Gloux S."/>
            <person name="Lelaure V."/>
            <person name="Mottier S."/>
            <person name="Galibert F."/>
            <person name="Aves S.J."/>
            <person name="Xiang Z."/>
            <person name="Hunt C."/>
            <person name="Moore K."/>
            <person name="Hurst S.M."/>
            <person name="Lucas M."/>
            <person name="Rochet M."/>
            <person name="Gaillardin C."/>
            <person name="Tallada V.A."/>
            <person name="Garzon A."/>
            <person name="Thode G."/>
            <person name="Daga R.R."/>
            <person name="Cruzado L."/>
            <person name="Jimenez J."/>
            <person name="Sanchez M."/>
            <person name="del Rey F."/>
            <person name="Benito J."/>
            <person name="Dominguez A."/>
            <person name="Revuelta J.L."/>
            <person name="Moreno S."/>
            <person name="Armstrong J."/>
            <person name="Forsburg S.L."/>
            <person name="Cerutti L."/>
            <person name="Lowe T."/>
            <person name="McCombie W.R."/>
            <person name="Paulsen I."/>
            <person name="Potashkin J."/>
            <person name="Shpakovski G.V."/>
            <person name="Ussery D."/>
            <person name="Barrell B.G."/>
            <person name="Nurse P."/>
        </authorList>
    </citation>
    <scope>NUCLEOTIDE SEQUENCE [LARGE SCALE GENOMIC DNA]</scope>
    <source>
        <strain>972 / ATCC 24843</strain>
    </source>
</reference>
<reference key="2">
    <citation type="journal article" date="2006" name="Nat. Biotechnol.">
        <title>ORFeome cloning and global analysis of protein localization in the fission yeast Schizosaccharomyces pombe.</title>
        <authorList>
            <person name="Matsuyama A."/>
            <person name="Arai R."/>
            <person name="Yashiroda Y."/>
            <person name="Shirai A."/>
            <person name="Kamata A."/>
            <person name="Sekido S."/>
            <person name="Kobayashi Y."/>
            <person name="Hashimoto A."/>
            <person name="Hamamoto M."/>
            <person name="Hiraoka Y."/>
            <person name="Horinouchi S."/>
            <person name="Yoshida M."/>
        </authorList>
    </citation>
    <scope>SUBCELLULAR LOCATION [LARGE SCALE ANALYSIS]</scope>
</reference>
<reference key="3">
    <citation type="journal article" date="2008" name="J. Biol. Chem.">
        <title>Ers1, a rapidly diverging protein essential for RNA interference-dependent heterochromatic silencing in Schizosaccharomyces pombe.</title>
        <authorList>
            <person name="Rougemaille M."/>
            <person name="Shankar S."/>
            <person name="Braun S."/>
            <person name="Rowley M."/>
            <person name="Madhani H.D."/>
        </authorList>
    </citation>
    <scope>FUNCTION</scope>
</reference>
<reference key="4">
    <citation type="journal article" date="2010" name="Genome Biol.">
        <title>Global fitness profiling of fission yeast deletion strains by barcode sequencing.</title>
        <authorList>
            <person name="Han T.X."/>
            <person name="Xu X.Y."/>
            <person name="Zhang M.J."/>
            <person name="Peng X."/>
            <person name="Du L.L."/>
        </authorList>
    </citation>
    <scope>DISRUPTION PHENOTYPE</scope>
</reference>
<proteinExistence type="evidence at protein level"/>
<protein>
    <recommendedName>
        <fullName>RNA-silencing factor ers1</fullName>
    </recommendedName>
</protein>
<feature type="chain" id="PRO_0000303939" description="RNA-silencing factor ers1">
    <location>
        <begin position="1"/>
        <end position="956"/>
    </location>
</feature>
<accession>O94717</accession>
<sequence length="956" mass="109007">MGKVSANNQSGFFKFYIDTALLLNAEFISSFTNCINSEYNGKVKISYSSSSQQFKVIVYEEHKREAFSLFEEIVQKLKRESTVYKKPRLDIHPFGQLHYDFTTLLNFQRYLDLGYGIEDVKIKENEDIVKSKVGKKPTSSDFYIPCLIKPKIITPFEWEGNFKQVIYSPTVYNGSFKRLFYLPDNNDLLKEFAHATNTKYKASLKDNKIVVLANNDQDINAMLEKMKHIENLVSQKVYEYPEETLVYAGKIAPCQLKFLKLKFENEILYTAMHTTSIFKSVFNILGSFYTMRLLRNKHDGDSYELVPVFAKNPSKTPPCNDNFKIFSDDIKLIGCKIFAGVSLNFSSPKPAHRFYELNKTSSNLSIPVLQKPSNFHSSSTELSDNSIHQGRRAVDPVVNQNNPSNFEEMIMNKLNKLPTIDKQILGTSSLTHFQDKTTAIEHSINKSNSKQPPRFKFQLPPRPTSNTLPLEPEEELVTRYSVSSDGNTVDEAITKQSQTFQLVNSNEFNEVNANDVHKSLRQNCAKLDFDDSKSKNLLSVECLELDKGSDCSTPKSGSLTPSIDMKFLRLQDEKMDDLGDNYYTILMSSNPVSSYGVGSLYLFQPKIVCSEKYINHEEIDNMNLKSLHRWLSRSLHVLQSFSGEIELNLEFGVILYPNISSDVSACSHGFMNIYKDLNLPRSYFADCITKSVSNIDSLLNTPVKILFGRTEYTYPLIEHEVLDSKNYFVFKGSLLFTDDKRNKTEDSTVFFSMICSSKLDQFAFYKDSKQSSTCTINFPLALWDSRLRIETKVPLNDAILTEFSKSIRFRNVNKDLLLVFGNMEDRVIIHSVTRINENSVPFNKNLLPHSLEFILKCSKVKSYDISPSSINSKEAFVCLDRSKESKPIESCFSLSIQSVYMQSQFKYNNSIRAGETAPWKLANKQFIGGAITENVSDLYTAAIIMVNQLGGIHPTI</sequence>
<keyword id="KW-0963">Cytoplasm</keyword>
<keyword id="KW-0206">Cytoskeleton</keyword>
<keyword id="KW-1185">Reference proteome</keyword>
<keyword id="KW-0943">RNA-mediated gene silencing</keyword>
<evidence type="ECO:0000269" key="1">
    <source>
    </source>
</evidence>
<evidence type="ECO:0000269" key="2">
    <source>
    </source>
</evidence>
<evidence type="ECO:0000269" key="3">
    <source>
    </source>
</evidence>
<organism>
    <name type="scientific">Schizosaccharomyces pombe (strain 972 / ATCC 24843)</name>
    <name type="common">Fission yeast</name>
    <dbReference type="NCBI Taxonomy" id="284812"/>
    <lineage>
        <taxon>Eukaryota</taxon>
        <taxon>Fungi</taxon>
        <taxon>Dikarya</taxon>
        <taxon>Ascomycota</taxon>
        <taxon>Taphrinomycotina</taxon>
        <taxon>Schizosaccharomycetes</taxon>
        <taxon>Schizosaccharomycetales</taxon>
        <taxon>Schizosaccharomycetaceae</taxon>
        <taxon>Schizosaccharomyces</taxon>
    </lineage>
</organism>
<gene>
    <name type="primary">ers1</name>
    <name type="ORF">SPCC1393.05</name>
</gene>
<dbReference type="EMBL" id="CU329672">
    <property type="protein sequence ID" value="CAB38161.1"/>
    <property type="molecule type" value="Genomic_DNA"/>
</dbReference>
<dbReference type="PIR" id="T40953">
    <property type="entry name" value="T40953"/>
</dbReference>
<dbReference type="RefSeq" id="NP_587963.1">
    <property type="nucleotide sequence ID" value="NM_001022954.2"/>
</dbReference>
<dbReference type="BioGRID" id="275275">
    <property type="interactions" value="118"/>
</dbReference>
<dbReference type="DIP" id="DIP-60034N"/>
<dbReference type="FunCoup" id="O94717">
    <property type="interactions" value="5"/>
</dbReference>
<dbReference type="IntAct" id="O94717">
    <property type="interactions" value="5"/>
</dbReference>
<dbReference type="STRING" id="284812.O94717"/>
<dbReference type="iPTMnet" id="O94717"/>
<dbReference type="PaxDb" id="4896-SPCC1393.05.1"/>
<dbReference type="EnsemblFungi" id="SPCC1393.05.1">
    <property type="protein sequence ID" value="SPCC1393.05.1:pep"/>
    <property type="gene ID" value="SPCC1393.05"/>
</dbReference>
<dbReference type="GeneID" id="2538690"/>
<dbReference type="KEGG" id="spo:2538690"/>
<dbReference type="PomBase" id="SPCC1393.05">
    <property type="gene designation" value="ers1"/>
</dbReference>
<dbReference type="VEuPathDB" id="FungiDB:SPCC1393.05"/>
<dbReference type="HOGENOM" id="CLU_354942_0_0_1"/>
<dbReference type="InParanoid" id="O94717"/>
<dbReference type="OMA" id="AMIENSQ"/>
<dbReference type="PRO" id="PR:O94717"/>
<dbReference type="Proteomes" id="UP000002485">
    <property type="component" value="Chromosome III"/>
</dbReference>
<dbReference type="GO" id="GO:0005829">
    <property type="term" value="C:cytosol"/>
    <property type="evidence" value="ECO:0007005"/>
    <property type="project" value="PomBase"/>
</dbReference>
<dbReference type="GO" id="GO:0005634">
    <property type="term" value="C:nucleus"/>
    <property type="evidence" value="ECO:0007005"/>
    <property type="project" value="PomBase"/>
</dbReference>
<dbReference type="GO" id="GO:0005721">
    <property type="term" value="C:pericentric heterochromatin"/>
    <property type="evidence" value="ECO:0000314"/>
    <property type="project" value="PomBase"/>
</dbReference>
<dbReference type="GO" id="GO:0005816">
    <property type="term" value="C:spindle pole body"/>
    <property type="evidence" value="ECO:0007669"/>
    <property type="project" value="UniProtKB-SubCell"/>
</dbReference>
<dbReference type="GO" id="GO:0140463">
    <property type="term" value="F:chromatin-protein adaptor activity"/>
    <property type="evidence" value="ECO:0000269"/>
    <property type="project" value="PomBase"/>
</dbReference>
<dbReference type="GO" id="GO:0031048">
    <property type="term" value="P:regulatory ncRNA-mediated heterochromatin formation"/>
    <property type="evidence" value="ECO:0000315"/>
    <property type="project" value="PomBase"/>
</dbReference>
<dbReference type="GO" id="GO:0140727">
    <property type="term" value="P:siRNA-mediated pericentric heterochromatin formation"/>
    <property type="evidence" value="ECO:0000315"/>
    <property type="project" value="PomBase"/>
</dbReference>
<comment type="function">
    <text evidence="2">Involved in RNAi-dependent heterochromatin formation and centromeric silencing. Required for the conversion of centromeric pre-small interfering RNA transcripts into small interfering RNAs, histone H3 'Lys9' methylation, and the recruitment of the RITS complex to centromeric sequences.</text>
</comment>
<comment type="interaction">
    <interactant intactId="EBI-15977565">
        <id>O94717</id>
    </interactant>
    <interactant intactId="EBI-15624169">
        <id>O74465</id>
        <label>hrr1</label>
    </interactant>
    <organismsDiffer>false</organismsDiffer>
    <experiments>4</experiments>
</comment>
<comment type="interaction">
    <interactant intactId="EBI-15977565">
        <id>O94717</id>
    </interactant>
    <interactant intactId="EBI-926939">
        <id>P40381</id>
        <label>swi6</label>
    </interactant>
    <organismsDiffer>false</organismsDiffer>
    <experiments>3</experiments>
</comment>
<comment type="subcellular location">
    <subcellularLocation>
        <location evidence="1">Cytoplasm</location>
    </subcellularLocation>
    <subcellularLocation>
        <location evidence="1">Cytoplasm</location>
        <location evidence="1">Cytoskeleton</location>
        <location evidence="1">Microtubule organizing center</location>
        <location evidence="1">Spindle pole body</location>
    </subcellularLocation>
</comment>
<comment type="disruption phenotype">
    <text evidence="3">Leads to sensitivity to thiabendazole and microtubule depolymerizing drugs.</text>
</comment>